<protein>
    <recommendedName>
        <fullName evidence="1">Probable transcriptional regulatory protein BH0025</fullName>
    </recommendedName>
</protein>
<dbReference type="EMBL" id="CP000048">
    <property type="protein sequence ID" value="AAX16550.1"/>
    <property type="molecule type" value="Genomic_DNA"/>
</dbReference>
<dbReference type="RefSeq" id="WP_012421807.1">
    <property type="nucleotide sequence ID" value="NZ_CP073136.1"/>
</dbReference>
<dbReference type="SMR" id="B2S1L3"/>
<dbReference type="KEGG" id="bhr:BH0025"/>
<dbReference type="HOGENOM" id="CLU_062974_2_2_12"/>
<dbReference type="Proteomes" id="UP000008834">
    <property type="component" value="Chromosome"/>
</dbReference>
<dbReference type="GO" id="GO:0005829">
    <property type="term" value="C:cytosol"/>
    <property type="evidence" value="ECO:0007669"/>
    <property type="project" value="TreeGrafter"/>
</dbReference>
<dbReference type="GO" id="GO:0003677">
    <property type="term" value="F:DNA binding"/>
    <property type="evidence" value="ECO:0007669"/>
    <property type="project" value="UniProtKB-UniRule"/>
</dbReference>
<dbReference type="GO" id="GO:0006355">
    <property type="term" value="P:regulation of DNA-templated transcription"/>
    <property type="evidence" value="ECO:0007669"/>
    <property type="project" value="UniProtKB-UniRule"/>
</dbReference>
<dbReference type="FunFam" id="1.10.10.200:FF:000002">
    <property type="entry name" value="Probable transcriptional regulatory protein CLM62_37755"/>
    <property type="match status" value="1"/>
</dbReference>
<dbReference type="Gene3D" id="1.10.10.200">
    <property type="match status" value="1"/>
</dbReference>
<dbReference type="Gene3D" id="3.30.70.980">
    <property type="match status" value="2"/>
</dbReference>
<dbReference type="HAMAP" id="MF_00693">
    <property type="entry name" value="Transcrip_reg_TACO1"/>
    <property type="match status" value="1"/>
</dbReference>
<dbReference type="InterPro" id="IPR017856">
    <property type="entry name" value="Integrase-like_N"/>
</dbReference>
<dbReference type="InterPro" id="IPR048300">
    <property type="entry name" value="TACO1_YebC-like_2nd/3rd_dom"/>
</dbReference>
<dbReference type="InterPro" id="IPR049083">
    <property type="entry name" value="TACO1_YebC_N"/>
</dbReference>
<dbReference type="InterPro" id="IPR002876">
    <property type="entry name" value="Transcrip_reg_TACO1-like"/>
</dbReference>
<dbReference type="InterPro" id="IPR026564">
    <property type="entry name" value="Transcrip_reg_TACO1-like_dom3"/>
</dbReference>
<dbReference type="InterPro" id="IPR029072">
    <property type="entry name" value="YebC-like"/>
</dbReference>
<dbReference type="NCBIfam" id="NF001030">
    <property type="entry name" value="PRK00110.1"/>
    <property type="match status" value="1"/>
</dbReference>
<dbReference type="NCBIfam" id="NF009044">
    <property type="entry name" value="PRK12378.1"/>
    <property type="match status" value="1"/>
</dbReference>
<dbReference type="NCBIfam" id="TIGR01033">
    <property type="entry name" value="YebC/PmpR family DNA-binding transcriptional regulator"/>
    <property type="match status" value="1"/>
</dbReference>
<dbReference type="PANTHER" id="PTHR12532:SF6">
    <property type="entry name" value="TRANSCRIPTIONAL REGULATORY PROTEIN YEBC-RELATED"/>
    <property type="match status" value="1"/>
</dbReference>
<dbReference type="PANTHER" id="PTHR12532">
    <property type="entry name" value="TRANSLATIONAL ACTIVATOR OF CYTOCHROME C OXIDASE 1"/>
    <property type="match status" value="1"/>
</dbReference>
<dbReference type="Pfam" id="PF20772">
    <property type="entry name" value="TACO1_YebC_N"/>
    <property type="match status" value="1"/>
</dbReference>
<dbReference type="Pfam" id="PF01709">
    <property type="entry name" value="Transcrip_reg"/>
    <property type="match status" value="1"/>
</dbReference>
<dbReference type="SUPFAM" id="SSF75625">
    <property type="entry name" value="YebC-like"/>
    <property type="match status" value="1"/>
</dbReference>
<keyword id="KW-0963">Cytoplasm</keyword>
<keyword id="KW-0238">DNA-binding</keyword>
<keyword id="KW-0804">Transcription</keyword>
<keyword id="KW-0805">Transcription regulation</keyword>
<name>Y025_BORHD</name>
<comment type="subcellular location">
    <subcellularLocation>
        <location evidence="1">Cytoplasm</location>
    </subcellularLocation>
</comment>
<comment type="similarity">
    <text evidence="1">Belongs to the TACO1 family.</text>
</comment>
<reference key="1">
    <citation type="submission" date="2004-12" db="EMBL/GenBank/DDBJ databases">
        <title>The genome sequence of Borrelia hermsii and Borrelia turicatae: comparative analysis of two agents of endemic N. America relapsing fever.</title>
        <authorList>
            <person name="Porcella S.F."/>
            <person name="Raffel S.J."/>
            <person name="Schrumpf M.E."/>
            <person name="Montgomery B."/>
            <person name="Smith T."/>
            <person name="Schwan T.G."/>
        </authorList>
    </citation>
    <scope>NUCLEOTIDE SEQUENCE [LARGE SCALE GENOMIC DNA]</scope>
    <source>
        <strain>HS1 / DAH</strain>
    </source>
</reference>
<accession>B2S1L3</accession>
<organism>
    <name type="scientific">Borrelia hermsii (strain HS1 / DAH)</name>
    <dbReference type="NCBI Taxonomy" id="314723"/>
    <lineage>
        <taxon>Bacteria</taxon>
        <taxon>Pseudomonadati</taxon>
        <taxon>Spirochaetota</taxon>
        <taxon>Spirochaetia</taxon>
        <taxon>Spirochaetales</taxon>
        <taxon>Borreliaceae</taxon>
        <taxon>Borrelia</taxon>
    </lineage>
</organism>
<sequence>MSGHSKWSTIKRKKGALDAKRNKIFTKLIREISIAAKMGGGDIDSNPRLRLAINKARVSNMPKDNIEKAIKKGIGDNTGAEYFELTYEAYALHGVALIIKCLTDNKNRTASEVRSVLSKNGASLGAPGSVSYMFHKKGLISYSLDKYPEDEIMELALEAGAEDIYSEGSQIEVITSAETFEAISSVLRTKFEEDIAEIALLPENKISLNKEQIDKVLSLIEKLEDFDDVQEVVHNLEIIDEID</sequence>
<feature type="chain" id="PRO_1000132159" description="Probable transcriptional regulatory protein BH0025">
    <location>
        <begin position="1"/>
        <end position="243"/>
    </location>
</feature>
<gene>
    <name type="ordered locus">BH0025</name>
</gene>
<evidence type="ECO:0000255" key="1">
    <source>
        <dbReference type="HAMAP-Rule" id="MF_00693"/>
    </source>
</evidence>
<proteinExistence type="inferred from homology"/>